<keyword id="KW-0997">Cell inner membrane</keyword>
<keyword id="KW-1003">Cell membrane</keyword>
<keyword id="KW-0406">Ion transport</keyword>
<keyword id="KW-0472">Membrane</keyword>
<keyword id="KW-0630">Potassium</keyword>
<keyword id="KW-0633">Potassium transport</keyword>
<keyword id="KW-0812">Transmembrane</keyword>
<keyword id="KW-1133">Transmembrane helix</keyword>
<keyword id="KW-0813">Transport</keyword>
<feature type="chain" id="PRO_0000166521" description="Potassium-transporting ATPase potassium-binding subunit">
    <location>
        <begin position="1"/>
        <end position="559"/>
    </location>
</feature>
<feature type="transmembrane region" description="Helical" evidence="1">
    <location>
        <begin position="5"/>
        <end position="25"/>
    </location>
</feature>
<feature type="transmembrane region" description="Helical" evidence="1">
    <location>
        <begin position="27"/>
        <end position="47"/>
    </location>
</feature>
<feature type="transmembrane region" description="Helical" evidence="1">
    <location>
        <begin position="63"/>
        <end position="83"/>
    </location>
</feature>
<feature type="transmembrane region" description="Helical" evidence="1">
    <location>
        <begin position="132"/>
        <end position="152"/>
    </location>
</feature>
<feature type="transmembrane region" description="Helical" evidence="1">
    <location>
        <begin position="170"/>
        <end position="190"/>
    </location>
</feature>
<feature type="transmembrane region" description="Helical" evidence="1">
    <location>
        <begin position="253"/>
        <end position="273"/>
    </location>
</feature>
<feature type="transmembrane region" description="Helical" evidence="1">
    <location>
        <begin position="283"/>
        <end position="303"/>
    </location>
</feature>
<feature type="transmembrane region" description="Helical" evidence="1">
    <location>
        <begin position="327"/>
        <end position="347"/>
    </location>
</feature>
<feature type="transmembrane region" description="Helical" evidence="1">
    <location>
        <begin position="356"/>
        <end position="376"/>
    </location>
</feature>
<feature type="transmembrane region" description="Helical" evidence="1">
    <location>
        <begin position="379"/>
        <end position="399"/>
    </location>
</feature>
<feature type="transmembrane region" description="Helical" evidence="1">
    <location>
        <begin position="416"/>
        <end position="436"/>
    </location>
</feature>
<feature type="transmembrane region" description="Helical" evidence="1">
    <location>
        <begin position="484"/>
        <end position="504"/>
    </location>
</feature>
<feature type="transmembrane region" description="Helical" evidence="1">
    <location>
        <begin position="524"/>
        <end position="544"/>
    </location>
</feature>
<sequence>MAAQGFLLIASFLLILLVLAKPLGSGLARLIAAVPLPGVAGVERILWRTLGITDHEMNWRQYLLALLTLNLLGLGILFCLLFWQEWLPLNPQRLPGLSWDLALNTAVSFVTNTNWQAYSGESTLSYFSQMAGLTVQNFLSAATGIAVVFALIRAFTRQNVHTLGNAWQDLVRITLWILFPVALIIALFFIQQGVPQNLSAYQPITTLEGAKQLLPMGPVASQEAIKMLGTNGGGFFNANSSHPFENPTALTNLAQMLAIFLIPAALCFAFGEAAGDRRQGRALLWAMSFIFVVCVAVVMWAEVQGNPHLLAAGADSSVNMEGKEARFGVLASSLFAVVTTAASCGAVNAMHDSFTALGGMVPMWLMQIGEVVFGGVGSGLYGMLLFVLLAVFIAGLMIGRTPEYLGKKIDVREMKMTALAILVTPMLVLLGSALAMMTDAGRSAMLNPGPHGFSEVLYAVSSAANNNGSAFAGLSANSPFWNCLLAFCMFVGRFGVIIPVMAIAGSLVSKKVQPASQGTLATHGALFIGLLIGTVLLVGALTFIPALALGPVAEHFSLP</sequence>
<proteinExistence type="inferred from homology"/>
<gene>
    <name evidence="1" type="primary">kdpA</name>
    <name type="ordered locus">STY0747</name>
    <name type="ordered locus">t2169</name>
</gene>
<name>KDPA_SALTI</name>
<dbReference type="EMBL" id="AL513382">
    <property type="protein sequence ID" value="CAD05169.1"/>
    <property type="molecule type" value="Genomic_DNA"/>
</dbReference>
<dbReference type="EMBL" id="AE014613">
    <property type="protein sequence ID" value="AAO69780.1"/>
    <property type="molecule type" value="Genomic_DNA"/>
</dbReference>
<dbReference type="RefSeq" id="NP_455266.1">
    <property type="nucleotide sequence ID" value="NC_003198.1"/>
</dbReference>
<dbReference type="RefSeq" id="WP_000730077.1">
    <property type="nucleotide sequence ID" value="NZ_WSUR01000015.1"/>
</dbReference>
<dbReference type="SMR" id="Q8Z8E4"/>
<dbReference type="STRING" id="220341.gene:17584756"/>
<dbReference type="KEGG" id="stt:t2169"/>
<dbReference type="KEGG" id="sty:STY0747"/>
<dbReference type="PATRIC" id="fig|220341.7.peg.753"/>
<dbReference type="eggNOG" id="COG2060">
    <property type="taxonomic scope" value="Bacteria"/>
</dbReference>
<dbReference type="HOGENOM" id="CLU_018614_3_0_6"/>
<dbReference type="OMA" id="WQNYGGE"/>
<dbReference type="OrthoDB" id="9763796at2"/>
<dbReference type="Proteomes" id="UP000000541">
    <property type="component" value="Chromosome"/>
</dbReference>
<dbReference type="Proteomes" id="UP000002670">
    <property type="component" value="Chromosome"/>
</dbReference>
<dbReference type="GO" id="GO:0005886">
    <property type="term" value="C:plasma membrane"/>
    <property type="evidence" value="ECO:0007669"/>
    <property type="project" value="UniProtKB-SubCell"/>
</dbReference>
<dbReference type="GO" id="GO:0008556">
    <property type="term" value="F:P-type potassium transmembrane transporter activity"/>
    <property type="evidence" value="ECO:0007669"/>
    <property type="project" value="InterPro"/>
</dbReference>
<dbReference type="GO" id="GO:0030955">
    <property type="term" value="F:potassium ion binding"/>
    <property type="evidence" value="ECO:0007669"/>
    <property type="project" value="UniProtKB-UniRule"/>
</dbReference>
<dbReference type="HAMAP" id="MF_00275">
    <property type="entry name" value="KdpA"/>
    <property type="match status" value="1"/>
</dbReference>
<dbReference type="InterPro" id="IPR004623">
    <property type="entry name" value="KdpA"/>
</dbReference>
<dbReference type="NCBIfam" id="TIGR00680">
    <property type="entry name" value="kdpA"/>
    <property type="match status" value="1"/>
</dbReference>
<dbReference type="PANTHER" id="PTHR30607">
    <property type="entry name" value="POTASSIUM-TRANSPORTING ATPASE A CHAIN"/>
    <property type="match status" value="1"/>
</dbReference>
<dbReference type="PANTHER" id="PTHR30607:SF2">
    <property type="entry name" value="POTASSIUM-TRANSPORTING ATPASE POTASSIUM-BINDING SUBUNIT"/>
    <property type="match status" value="1"/>
</dbReference>
<dbReference type="Pfam" id="PF03814">
    <property type="entry name" value="KdpA"/>
    <property type="match status" value="1"/>
</dbReference>
<dbReference type="PIRSF" id="PIRSF001294">
    <property type="entry name" value="K_ATPaseA"/>
    <property type="match status" value="1"/>
</dbReference>
<reference key="1">
    <citation type="journal article" date="2001" name="Nature">
        <title>Complete genome sequence of a multiple drug resistant Salmonella enterica serovar Typhi CT18.</title>
        <authorList>
            <person name="Parkhill J."/>
            <person name="Dougan G."/>
            <person name="James K.D."/>
            <person name="Thomson N.R."/>
            <person name="Pickard D."/>
            <person name="Wain J."/>
            <person name="Churcher C.M."/>
            <person name="Mungall K.L."/>
            <person name="Bentley S.D."/>
            <person name="Holden M.T.G."/>
            <person name="Sebaihia M."/>
            <person name="Baker S."/>
            <person name="Basham D."/>
            <person name="Brooks K."/>
            <person name="Chillingworth T."/>
            <person name="Connerton P."/>
            <person name="Cronin A."/>
            <person name="Davis P."/>
            <person name="Davies R.M."/>
            <person name="Dowd L."/>
            <person name="White N."/>
            <person name="Farrar J."/>
            <person name="Feltwell T."/>
            <person name="Hamlin N."/>
            <person name="Haque A."/>
            <person name="Hien T.T."/>
            <person name="Holroyd S."/>
            <person name="Jagels K."/>
            <person name="Krogh A."/>
            <person name="Larsen T.S."/>
            <person name="Leather S."/>
            <person name="Moule S."/>
            <person name="O'Gaora P."/>
            <person name="Parry C."/>
            <person name="Quail M.A."/>
            <person name="Rutherford K.M."/>
            <person name="Simmonds M."/>
            <person name="Skelton J."/>
            <person name="Stevens K."/>
            <person name="Whitehead S."/>
            <person name="Barrell B.G."/>
        </authorList>
    </citation>
    <scope>NUCLEOTIDE SEQUENCE [LARGE SCALE GENOMIC DNA]</scope>
    <source>
        <strain>CT18</strain>
    </source>
</reference>
<reference key="2">
    <citation type="journal article" date="2003" name="J. Bacteriol.">
        <title>Comparative genomics of Salmonella enterica serovar Typhi strains Ty2 and CT18.</title>
        <authorList>
            <person name="Deng W."/>
            <person name="Liou S.-R."/>
            <person name="Plunkett G. III"/>
            <person name="Mayhew G.F."/>
            <person name="Rose D.J."/>
            <person name="Burland V."/>
            <person name="Kodoyianni V."/>
            <person name="Schwartz D.C."/>
            <person name="Blattner F.R."/>
        </authorList>
    </citation>
    <scope>NUCLEOTIDE SEQUENCE [LARGE SCALE GENOMIC DNA]</scope>
    <source>
        <strain>ATCC 700931 / Ty2</strain>
    </source>
</reference>
<organism>
    <name type="scientific">Salmonella typhi</name>
    <dbReference type="NCBI Taxonomy" id="90370"/>
    <lineage>
        <taxon>Bacteria</taxon>
        <taxon>Pseudomonadati</taxon>
        <taxon>Pseudomonadota</taxon>
        <taxon>Gammaproteobacteria</taxon>
        <taxon>Enterobacterales</taxon>
        <taxon>Enterobacteriaceae</taxon>
        <taxon>Salmonella</taxon>
    </lineage>
</organism>
<protein>
    <recommendedName>
        <fullName evidence="1">Potassium-transporting ATPase potassium-binding subunit</fullName>
    </recommendedName>
    <alternativeName>
        <fullName evidence="1">ATP phosphohydrolase [potassium-transporting] A chain</fullName>
    </alternativeName>
    <alternativeName>
        <fullName evidence="1">Potassium-binding and translocating subunit A</fullName>
    </alternativeName>
    <alternativeName>
        <fullName evidence="1">Potassium-translocating ATPase A chain</fullName>
    </alternativeName>
</protein>
<evidence type="ECO:0000255" key="1">
    <source>
        <dbReference type="HAMAP-Rule" id="MF_00275"/>
    </source>
</evidence>
<accession>Q8Z8E4</accession>
<comment type="function">
    <text evidence="1">Part of the high-affinity ATP-driven potassium transport (or Kdp) system, which catalyzes the hydrolysis of ATP coupled with the electrogenic transport of potassium into the cytoplasm. This subunit binds the periplasmic potassium ions and delivers the ions to the membrane domain of KdpB through an intramembrane tunnel.</text>
</comment>
<comment type="subunit">
    <text evidence="1">The system is composed of three essential subunits: KdpA, KdpB and KdpC.</text>
</comment>
<comment type="subcellular location">
    <subcellularLocation>
        <location evidence="1">Cell inner membrane</location>
        <topology evidence="1">Multi-pass membrane protein</topology>
    </subcellularLocation>
</comment>
<comment type="similarity">
    <text evidence="1">Belongs to the KdpA family.</text>
</comment>